<name>AQP3_HUMAN</name>
<gene>
    <name evidence="13 17" type="primary">AQP3</name>
</gene>
<keyword id="KW-0025">Alternative splicing</keyword>
<keyword id="KW-0095">Blood group antigen</keyword>
<keyword id="KW-1003">Cell membrane</keyword>
<keyword id="KW-0325">Glycoprotein</keyword>
<keyword id="KW-0472">Membrane</keyword>
<keyword id="KW-1267">Proteomics identification</keyword>
<keyword id="KW-1185">Reference proteome</keyword>
<keyword id="KW-0677">Repeat</keyword>
<keyword id="KW-0812">Transmembrane</keyword>
<keyword id="KW-1133">Transmembrane helix</keyword>
<keyword id="KW-0813">Transport</keyword>
<accession>Q92482</accession>
<accession>A8K843</accession>
<accession>B2RE16</accession>
<accession>D3DRL3</accession>
<accession>O00108</accession>
<accession>Q6FGT2</accession>
<accession>Q6FGW6</accession>
<evidence type="ECO:0000250" key="1">
    <source>
        <dbReference type="UniProtKB" id="O14520"/>
    </source>
</evidence>
<evidence type="ECO:0000250" key="2">
    <source>
        <dbReference type="UniProtKB" id="P47862"/>
    </source>
</evidence>
<evidence type="ECO:0000250" key="3">
    <source>
        <dbReference type="UniProtKB" id="Q8R2N1"/>
    </source>
</evidence>
<evidence type="ECO:0000255" key="4"/>
<evidence type="ECO:0000269" key="5">
    <source>
    </source>
</evidence>
<evidence type="ECO:0000269" key="6">
    <source>
    </source>
</evidence>
<evidence type="ECO:0000269" key="7">
    <source>
    </source>
</evidence>
<evidence type="ECO:0000269" key="8">
    <source>
    </source>
</evidence>
<evidence type="ECO:0000269" key="9">
    <source>
    </source>
</evidence>
<evidence type="ECO:0000269" key="10">
    <source ref="7"/>
</evidence>
<evidence type="ECO:0000303" key="11">
    <source>
    </source>
</evidence>
<evidence type="ECO:0000303" key="12">
    <source>
    </source>
</evidence>
<evidence type="ECO:0000303" key="13">
    <source>
    </source>
</evidence>
<evidence type="ECO:0000305" key="14"/>
<evidence type="ECO:0000305" key="15">
    <source>
    </source>
</evidence>
<evidence type="ECO:0000305" key="16">
    <source>
    </source>
</evidence>
<evidence type="ECO:0000312" key="17">
    <source>
        <dbReference type="HGNC" id="HGNC:636"/>
    </source>
</evidence>
<comment type="function">
    <text evidence="2 3 6 8 9">Aquaglyceroporins form homotetrameric transmembrane channels, with each monomer independently mediating glycerol and water transport across the plasma membrane along their osmotic gradient (PubMed:12239222, PubMed:30420639). Could also be permeable to urea (By similarity). Also participates in cell permeability to H2O2 and H2O2-mediated signaling (PubMed:20724658). In skin, transports glycerol to the epidermis and stratum corneum, where it maintains hydration, elasticity, and supports lipid biosynthesis for barrier repair (By similarity). In kidney, contributes to the reabsorption of water, helping the body maintain proper fluid balance (By similarity).</text>
</comment>
<comment type="catalytic activity">
    <reaction evidence="6 9">
        <text>glycerol(in) = glycerol(out)</text>
        <dbReference type="Rhea" id="RHEA:29675"/>
        <dbReference type="ChEBI" id="CHEBI:17754"/>
    </reaction>
</comment>
<comment type="catalytic activity">
    <reaction evidence="6 9">
        <text>H2O(in) = H2O(out)</text>
        <dbReference type="Rhea" id="RHEA:29667"/>
        <dbReference type="ChEBI" id="CHEBI:15377"/>
    </reaction>
</comment>
<comment type="catalytic activity">
    <reaction evidence="15">
        <text>H2O2(out) = H2O2(in)</text>
        <dbReference type="Rhea" id="RHEA:74375"/>
        <dbReference type="ChEBI" id="CHEBI:16240"/>
    </reaction>
</comment>
<comment type="catalytic activity">
    <reaction evidence="2">
        <text>urea(in) = urea(out)</text>
        <dbReference type="Rhea" id="RHEA:32799"/>
        <dbReference type="ChEBI" id="CHEBI:16199"/>
    </reaction>
</comment>
<comment type="activity regulation">
    <text evidence="9">Glycerol transport is regulated by pH, with the porin being permeable to glycerol at pH 7.4 but not at pH 5.5 (PubMed:30420639). Water permeability, however, is not influenced by pH (PubMed:30420639).</text>
</comment>
<comment type="subunit">
    <text evidence="1 5">Homotetramer; each monomer provides an independent glycerol/water pore (By similarity). Could also exist in other oligomeric states (PubMed:11751877).</text>
</comment>
<comment type="interaction">
    <interactant intactId="EBI-2808854">
        <id>Q92482</id>
    </interactant>
    <interactant intactId="EBI-2808854">
        <id>Q92482</id>
        <label>AQP3</label>
    </interactant>
    <organismsDiffer>false</organismsDiffer>
    <experiments>3</experiments>
</comment>
<comment type="interaction">
    <interactant intactId="EBI-2808854">
        <id>Q92482</id>
    </interactant>
    <interactant intactId="EBI-7797864">
        <id>P11912</id>
        <label>CD79A</label>
    </interactant>
    <organismsDiffer>false</organismsDiffer>
    <experiments>3</experiments>
</comment>
<comment type="interaction">
    <interactant intactId="EBI-2808854">
        <id>Q92482</id>
    </interactant>
    <interactant intactId="EBI-711490">
        <id>Q9UKR5</id>
        <label>ERG28</label>
    </interactant>
    <organismsDiffer>false</organismsDiffer>
    <experiments>3</experiments>
</comment>
<comment type="interaction">
    <interactant intactId="EBI-2808854">
        <id>Q92482</id>
    </interactant>
    <interactant intactId="EBI-781551">
        <id>Q9Y282</id>
        <label>ERGIC3</label>
    </interactant>
    <organismsDiffer>false</organismsDiffer>
    <experiments>3</experiments>
</comment>
<comment type="interaction">
    <interactant intactId="EBI-2808854">
        <id>Q92482</id>
    </interactant>
    <interactant intactId="EBI-17640610">
        <id>P34910-2</id>
        <label>EVI2B</label>
    </interactant>
    <organismsDiffer>false</organismsDiffer>
    <experiments>3</experiments>
</comment>
<comment type="interaction">
    <interactant intactId="EBI-2808854">
        <id>Q92482</id>
    </interactant>
    <interactant intactId="EBI-18304435">
        <id>Q5JX71</id>
        <label>FAM209A</label>
    </interactant>
    <organismsDiffer>false</organismsDiffer>
    <experiments>3</experiments>
</comment>
<comment type="interaction">
    <interactant intactId="EBI-2808854">
        <id>Q92482</id>
    </interactant>
    <interactant intactId="EBI-6166686">
        <id>Q96F15</id>
        <label>GIMAP5</label>
    </interactant>
    <organismsDiffer>false</organismsDiffer>
    <experiments>3</experiments>
</comment>
<comment type="interaction">
    <interactant intactId="EBI-2808854">
        <id>Q92482</id>
    </interactant>
    <interactant intactId="EBI-13345167">
        <id>Q8TDT2</id>
        <label>GPR152</label>
    </interactant>
    <organismsDiffer>false</organismsDiffer>
    <experiments>3</experiments>
</comment>
<comment type="interaction">
    <interactant intactId="EBI-2808854">
        <id>Q92482</id>
    </interactant>
    <interactant intactId="EBI-11721746">
        <id>Q8TED1</id>
        <label>GPX8</label>
    </interactant>
    <organismsDiffer>false</organismsDiffer>
    <experiments>3</experiments>
</comment>
<comment type="interaction">
    <interactant intactId="EBI-2808854">
        <id>Q92482</id>
    </interactant>
    <interactant intactId="EBI-11427100">
        <id>P31937</id>
        <label>HIBADH</label>
    </interactant>
    <organismsDiffer>false</organismsDiffer>
    <experiments>3</experiments>
</comment>
<comment type="interaction">
    <interactant intactId="EBI-2808854">
        <id>Q92482</id>
    </interactant>
    <interactant intactId="EBI-17490413">
        <id>A8MZ59</id>
        <label>LEUTX</label>
    </interactant>
    <organismsDiffer>false</organismsDiffer>
    <experiments>3</experiments>
</comment>
<comment type="interaction">
    <interactant intactId="EBI-2808854">
        <id>Q92482</id>
    </interactant>
    <interactant intactId="EBI-11956541">
        <id>Q9GZY8-5</id>
        <label>MFF</label>
    </interactant>
    <organismsDiffer>false</organismsDiffer>
    <experiments>3</experiments>
</comment>
<comment type="interaction">
    <interactant intactId="EBI-2808854">
        <id>Q92482</id>
    </interactant>
    <interactant intactId="EBI-724754">
        <id>O14880</id>
        <label>MGST3</label>
    </interactant>
    <organismsDiffer>false</organismsDiffer>
    <experiments>3</experiments>
</comment>
<comment type="interaction">
    <interactant intactId="EBI-2808854">
        <id>Q92482</id>
    </interactant>
    <interactant intactId="EBI-5454865">
        <id>Q6IN84</id>
        <label>MRM1</label>
    </interactant>
    <organismsDiffer>false</organismsDiffer>
    <experiments>3</experiments>
</comment>
<comment type="interaction">
    <interactant intactId="EBI-2808854">
        <id>Q92482</id>
    </interactant>
    <interactant intactId="EBI-17263240">
        <id>P15941-11</id>
        <label>MUC1</label>
    </interactant>
    <organismsDiffer>false</organismsDiffer>
    <experiments>3</experiments>
</comment>
<comment type="interaction">
    <interactant intactId="EBI-2808854">
        <id>Q92482</id>
    </interactant>
    <interactant intactId="EBI-12051377">
        <id>Q8N912</id>
        <label>NRAC</label>
    </interactant>
    <organismsDiffer>false</organismsDiffer>
    <experiments>3</experiments>
</comment>
<comment type="interaction">
    <interactant intactId="EBI-2808854">
        <id>Q92482</id>
    </interactant>
    <interactant intactId="EBI-2804156">
        <id>Q6UX06</id>
        <label>OLFM4</label>
    </interactant>
    <organismsDiffer>false</organismsDiffer>
    <experiments>3</experiments>
</comment>
<comment type="interaction">
    <interactant intactId="EBI-2808854">
        <id>Q92482</id>
    </interactant>
    <interactant intactId="EBI-608347">
        <id>Q04941</id>
        <label>PLP2</label>
    </interactant>
    <organismsDiffer>false</organismsDiffer>
    <experiments>3</experiments>
</comment>
<comment type="interaction">
    <interactant intactId="EBI-2808854">
        <id>Q92482</id>
    </interactant>
    <interactant intactId="EBI-3920694">
        <id>Q9NR31</id>
        <label>SAR1A</label>
    </interactant>
    <organismsDiffer>false</organismsDiffer>
    <experiments>3</experiments>
</comment>
<comment type="interaction">
    <interactant intactId="EBI-2808854">
        <id>Q92482</id>
    </interactant>
    <interactant intactId="EBI-1046170">
        <id>O95470</id>
        <label>SGPL1</label>
    </interactant>
    <organismsDiffer>false</organismsDiffer>
    <experiments>3</experiments>
</comment>
<comment type="interaction">
    <interactant intactId="EBI-2808854">
        <id>Q92482</id>
    </interactant>
    <interactant intactId="EBI-17280858">
        <id>Q8WWF3</id>
        <label>SSMEM1</label>
    </interactant>
    <organismsDiffer>false</organismsDiffer>
    <experiments>3</experiments>
</comment>
<comment type="interaction">
    <interactant intactId="EBI-2808854">
        <id>Q92482</id>
    </interactant>
    <interactant intactId="EBI-712466">
        <id>Q16623</id>
        <label>STX1A</label>
    </interactant>
    <organismsDiffer>false</organismsDiffer>
    <experiments>3</experiments>
</comment>
<comment type="interaction">
    <interactant intactId="EBI-2808854">
        <id>Q92482</id>
    </interactant>
    <interactant intactId="EBI-12845616">
        <id>Q6UX40</id>
        <label>TMEM107</label>
    </interactant>
    <organismsDiffer>false</organismsDiffer>
    <experiments>3</experiments>
</comment>
<comment type="interaction">
    <interactant intactId="EBI-2808854">
        <id>Q92482</id>
    </interactant>
    <interactant intactId="EBI-12038591">
        <id>Q69YG0</id>
        <label>TMEM42</label>
    </interactant>
    <organismsDiffer>false</organismsDiffer>
    <experiments>3</experiments>
</comment>
<comment type="interaction">
    <interactant intactId="EBI-2808854">
        <id>Q92482</id>
    </interactant>
    <interactant intactId="EBI-12015604">
        <id>Q8N2M4</id>
        <label>TMEM86A</label>
    </interactant>
    <organismsDiffer>false</organismsDiffer>
    <experiments>3</experiments>
</comment>
<comment type="interaction">
    <interactant intactId="EBI-2808854">
        <id>Q92482</id>
    </interactant>
    <interactant intactId="EBI-359977">
        <id>P01375</id>
        <label>TNF</label>
    </interactant>
    <organismsDiffer>false</organismsDiffer>
    <experiments>3</experiments>
</comment>
<comment type="interaction">
    <interactant intactId="EBI-2808854">
        <id>Q92482</id>
    </interactant>
    <interactant intactId="EBI-10249550">
        <id>Q6EMK4</id>
        <label>VASN</label>
    </interactant>
    <organismsDiffer>false</organismsDiffer>
    <experiments>3</experiments>
</comment>
<comment type="subcellular location">
    <subcellularLocation>
        <location evidence="6">Cell membrane</location>
        <topology evidence="1">Multi-pass membrane protein</topology>
    </subcellularLocation>
    <subcellularLocation>
        <location evidence="2">Basolateral cell membrane</location>
        <topology evidence="1">Multi-pass membrane protein</topology>
    </subcellularLocation>
</comment>
<comment type="alternative products">
    <event type="alternative splicing"/>
    <isoform>
        <id>Q92482-1</id>
        <name>1</name>
        <sequence type="displayed"/>
    </isoform>
    <isoform>
        <id>Q92482-2</id>
        <name>2</name>
        <name>delta5</name>
        <sequence type="described" ref="VSP_003229 VSP_003230"/>
    </isoform>
</comment>
<comment type="tissue specificity">
    <text>Widely expressed in epithelial cells of kidney (collecting ducts) and airways, in keratinocytes, immature dendritic cells and erythrocytes. Isoform 2 is not detectable in erythrocytes at the protein level.</text>
</comment>
<comment type="induction">
    <text evidence="7">Up-regulated by magnesium.</text>
</comment>
<comment type="domain">
    <text evidence="1">Aquaporins contain two tandem repeats each containing three membrane-spanning domains and a pore-forming loop with the signature motif Asn-Pro-Ala (NPA).</text>
</comment>
<comment type="polymorphism">
    <text>AQP3 is responsible for the GIL blood group system. Isoform 2 is detected in GIL-negative individuals that lack functional AQP3.</text>
</comment>
<comment type="miscellaneous">
    <molecule>Isoform 2</molecule>
    <text evidence="14">Due to a polymorphism at the 5'-splice donor site of intron 5, leading to exon 5 skipping and premature termination of translation. This is the molecular basis of the GIL blood group.</text>
</comment>
<comment type="similarity">
    <text evidence="14">Belongs to the MIP/aquaporin (TC 1.A.8) family.</text>
</comment>
<sequence>MGRQKELVSRCGEMLHIRYRLLRQALAECLGTLILVMFGCGSVAQVVLSRGTHGGFLTINLAFGFAVTLGILIAGQVSGAHLNPAVTFAMCFLAREPWIKLPIYTLAQTLGAFLGAGIVFGLYYDAIWHFADNQLFVSGPNGTAGIFATYPSGHLDMINGFFDQFIGTASLIVCVLAIVDPYNNPVPRGLEAFTVGLVVLVIGTSMGFNSGYAVNPARDFGPRLFTALAGWGSAVFTTGQHWWWVPIVSPLLGSIAGVFVYQLMIGCHLEQPPPSNEEENVKLAHVKHKEQI</sequence>
<protein>
    <recommendedName>
        <fullName evidence="12">Aquaporin-3</fullName>
        <shortName>AQP-3</shortName>
    </recommendedName>
    <alternativeName>
        <fullName evidence="16">Aquaglyceroporin-3</fullName>
    </alternativeName>
</protein>
<dbReference type="EMBL" id="AB001325">
    <property type="protein sequence ID" value="BAA19237.1"/>
    <property type="molecule type" value="mRNA"/>
</dbReference>
<dbReference type="EMBL" id="AJ493597">
    <property type="protein sequence ID" value="CAD38526.1"/>
    <property type="molecule type" value="mRNA"/>
</dbReference>
<dbReference type="EMBL" id="CR541991">
    <property type="protein sequence ID" value="CAG46788.1"/>
    <property type="molecule type" value="mRNA"/>
</dbReference>
<dbReference type="EMBL" id="CR542025">
    <property type="protein sequence ID" value="CAG46822.1"/>
    <property type="molecule type" value="mRNA"/>
</dbReference>
<dbReference type="EMBL" id="BT007199">
    <property type="protein sequence ID" value="AAP35863.1"/>
    <property type="molecule type" value="mRNA"/>
</dbReference>
<dbReference type="EMBL" id="AK292208">
    <property type="protein sequence ID" value="BAF84897.1"/>
    <property type="molecule type" value="mRNA"/>
</dbReference>
<dbReference type="EMBL" id="AK315760">
    <property type="protein sequence ID" value="BAG38113.1"/>
    <property type="molecule type" value="mRNA"/>
</dbReference>
<dbReference type="EMBL" id="DQ083949">
    <property type="protein sequence ID" value="AAY68214.1"/>
    <property type="molecule type" value="Genomic_DNA"/>
</dbReference>
<dbReference type="EMBL" id="AL356218">
    <property type="status" value="NOT_ANNOTATED_CDS"/>
    <property type="molecule type" value="Genomic_DNA"/>
</dbReference>
<dbReference type="EMBL" id="CH471071">
    <property type="protein sequence ID" value="EAW58500.1"/>
    <property type="molecule type" value="Genomic_DNA"/>
</dbReference>
<dbReference type="EMBL" id="CH471071">
    <property type="protein sequence ID" value="EAW58504.1"/>
    <property type="molecule type" value="Genomic_DNA"/>
</dbReference>
<dbReference type="EMBL" id="BC013566">
    <property type="protein sequence ID" value="AAH13566.1"/>
    <property type="molecule type" value="mRNA"/>
</dbReference>
<dbReference type="CCDS" id="CCDS6542.1">
    <molecule id="Q92482-1"/>
</dbReference>
<dbReference type="PIR" id="A57119">
    <property type="entry name" value="A57119"/>
</dbReference>
<dbReference type="RefSeq" id="NP_001305073.1">
    <property type="nucleotide sequence ID" value="NM_001318144.1"/>
</dbReference>
<dbReference type="RefSeq" id="NP_004916.1">
    <molecule id="Q92482-1"/>
    <property type="nucleotide sequence ID" value="NM_004925.5"/>
</dbReference>
<dbReference type="SMR" id="Q92482"/>
<dbReference type="BioGRID" id="106856">
    <property type="interactions" value="284"/>
</dbReference>
<dbReference type="FunCoup" id="Q92482">
    <property type="interactions" value="134"/>
</dbReference>
<dbReference type="IntAct" id="Q92482">
    <property type="interactions" value="233"/>
</dbReference>
<dbReference type="STRING" id="9606.ENSP00000297991"/>
<dbReference type="DrugBank" id="DB09020">
    <property type="generic name" value="Bisacodyl"/>
</dbReference>
<dbReference type="DrugBank" id="DB11365">
    <property type="generic name" value="Sennosides"/>
</dbReference>
<dbReference type="GuidetoPHARMACOLOGY" id="690"/>
<dbReference type="TCDB" id="1.A.8.9.24">
    <property type="family name" value="the major intrinsic protein (mip) family"/>
</dbReference>
<dbReference type="GlyCosmos" id="Q92482">
    <property type="glycosylation" value="1 site, No reported glycans"/>
</dbReference>
<dbReference type="GlyGen" id="Q92482">
    <property type="glycosylation" value="1 site"/>
</dbReference>
<dbReference type="iPTMnet" id="Q92482"/>
<dbReference type="PhosphoSitePlus" id="Q92482"/>
<dbReference type="BioMuta" id="AQP3"/>
<dbReference type="DMDM" id="2497938"/>
<dbReference type="jPOST" id="Q92482"/>
<dbReference type="MassIVE" id="Q92482"/>
<dbReference type="PaxDb" id="9606-ENSP00000297991"/>
<dbReference type="PeptideAtlas" id="Q92482"/>
<dbReference type="ProteomicsDB" id="75263">
    <molecule id="Q92482-1"/>
</dbReference>
<dbReference type="ProteomicsDB" id="75264">
    <molecule id="Q92482-2"/>
</dbReference>
<dbReference type="Pumba" id="Q92482"/>
<dbReference type="Antibodypedia" id="55184">
    <property type="antibodies" value="323 antibodies from 31 providers"/>
</dbReference>
<dbReference type="DNASU" id="360"/>
<dbReference type="Ensembl" id="ENST00000297991.6">
    <molecule id="Q92482-1"/>
    <property type="protein sequence ID" value="ENSP00000297991.4"/>
    <property type="gene ID" value="ENSG00000165272.16"/>
</dbReference>
<dbReference type="GeneID" id="360"/>
<dbReference type="KEGG" id="hsa:360"/>
<dbReference type="MANE-Select" id="ENST00000297991.6">
    <property type="protein sequence ID" value="ENSP00000297991.4"/>
    <property type="RefSeq nucleotide sequence ID" value="NM_004925.5"/>
    <property type="RefSeq protein sequence ID" value="NP_004916.1"/>
</dbReference>
<dbReference type="UCSC" id="uc003zsx.4">
    <molecule id="Q92482-1"/>
    <property type="organism name" value="human"/>
</dbReference>
<dbReference type="AGR" id="HGNC:636"/>
<dbReference type="CTD" id="360"/>
<dbReference type="DisGeNET" id="360"/>
<dbReference type="GeneCards" id="AQP3"/>
<dbReference type="HGNC" id="HGNC:636">
    <property type="gene designation" value="AQP3"/>
</dbReference>
<dbReference type="HPA" id="ENSG00000165272">
    <property type="expression patterns" value="Tissue enhanced (esophagus, skin, urinary bladder)"/>
</dbReference>
<dbReference type="MIM" id="600170">
    <property type="type" value="gene"/>
</dbReference>
<dbReference type="MIM" id="607457">
    <property type="type" value="phenotype"/>
</dbReference>
<dbReference type="neXtProt" id="NX_Q92482"/>
<dbReference type="OpenTargets" id="ENSG00000165272"/>
<dbReference type="PharmGKB" id="PA24921"/>
<dbReference type="VEuPathDB" id="HostDB:ENSG00000165272"/>
<dbReference type="eggNOG" id="KOG0224">
    <property type="taxonomic scope" value="Eukaryota"/>
</dbReference>
<dbReference type="GeneTree" id="ENSGT00940000157242"/>
<dbReference type="HOGENOM" id="CLU_020019_9_1_1"/>
<dbReference type="InParanoid" id="Q92482"/>
<dbReference type="OMA" id="FTSHHYY"/>
<dbReference type="OrthoDB" id="3222at2759"/>
<dbReference type="PAN-GO" id="Q92482">
    <property type="GO annotations" value="7 GO annotations based on evolutionary models"/>
</dbReference>
<dbReference type="PhylomeDB" id="Q92482"/>
<dbReference type="TreeFam" id="TF313173"/>
<dbReference type="PathwayCommons" id="Q92482"/>
<dbReference type="Reactome" id="R-HSA-432040">
    <property type="pathway name" value="Vasopressin regulates renal water homeostasis via Aquaporins"/>
</dbReference>
<dbReference type="Reactome" id="R-HSA-432047">
    <property type="pathway name" value="Passive transport by Aquaporins"/>
</dbReference>
<dbReference type="Reactome" id="R-HSA-9725554">
    <property type="pathway name" value="Differentiation of Keratinocytes in Interfollicular Epidermis in Mammalian Skin"/>
</dbReference>
<dbReference type="SignaLink" id="Q92482"/>
<dbReference type="SIGNOR" id="Q92482"/>
<dbReference type="BioGRID-ORCS" id="360">
    <property type="hits" value="10 hits in 1162 CRISPR screens"/>
</dbReference>
<dbReference type="ChiTaRS" id="AQP3">
    <property type="organism name" value="human"/>
</dbReference>
<dbReference type="GeneWiki" id="Aquaporin_3"/>
<dbReference type="GenomeRNAi" id="360"/>
<dbReference type="Pharos" id="Q92482">
    <property type="development level" value="Tchem"/>
</dbReference>
<dbReference type="PRO" id="PR:Q92482"/>
<dbReference type="Proteomes" id="UP000005640">
    <property type="component" value="Chromosome 9"/>
</dbReference>
<dbReference type="RNAct" id="Q92482">
    <property type="molecule type" value="protein"/>
</dbReference>
<dbReference type="Bgee" id="ENSG00000165272">
    <property type="expression patterns" value="Expressed in nasal cavity epithelium and 190 other cell types or tissues"/>
</dbReference>
<dbReference type="ExpressionAtlas" id="Q92482">
    <property type="expression patterns" value="baseline and differential"/>
</dbReference>
<dbReference type="GO" id="GO:0016323">
    <property type="term" value="C:basolateral plasma membrane"/>
    <property type="evidence" value="ECO:0000250"/>
    <property type="project" value="UniProtKB"/>
</dbReference>
<dbReference type="GO" id="GO:0005911">
    <property type="term" value="C:cell-cell junction"/>
    <property type="evidence" value="ECO:0000314"/>
    <property type="project" value="UniProtKB"/>
</dbReference>
<dbReference type="GO" id="GO:0005737">
    <property type="term" value="C:cytoplasm"/>
    <property type="evidence" value="ECO:0000314"/>
    <property type="project" value="UniProtKB"/>
</dbReference>
<dbReference type="GO" id="GO:0016020">
    <property type="term" value="C:membrane"/>
    <property type="evidence" value="ECO:0000305"/>
    <property type="project" value="BHF-UCL"/>
</dbReference>
<dbReference type="GO" id="GO:0005654">
    <property type="term" value="C:nucleoplasm"/>
    <property type="evidence" value="ECO:0000314"/>
    <property type="project" value="HPA"/>
</dbReference>
<dbReference type="GO" id="GO:0005886">
    <property type="term" value="C:plasma membrane"/>
    <property type="evidence" value="ECO:0000314"/>
    <property type="project" value="HPA"/>
</dbReference>
<dbReference type="GO" id="GO:0015254">
    <property type="term" value="F:glycerol channel activity"/>
    <property type="evidence" value="ECO:0000314"/>
    <property type="project" value="UniProtKB"/>
</dbReference>
<dbReference type="GO" id="GO:0042802">
    <property type="term" value="F:identical protein binding"/>
    <property type="evidence" value="ECO:0000353"/>
    <property type="project" value="IntAct"/>
</dbReference>
<dbReference type="GO" id="GO:0015250">
    <property type="term" value="F:water channel activity"/>
    <property type="evidence" value="ECO:0000314"/>
    <property type="project" value="UniProtKB"/>
</dbReference>
<dbReference type="GO" id="GO:0071456">
    <property type="term" value="P:cellular response to hypoxia"/>
    <property type="evidence" value="ECO:0000314"/>
    <property type="project" value="MGI"/>
</dbReference>
<dbReference type="GO" id="GO:0051649">
    <property type="term" value="P:establishment of localization in cell"/>
    <property type="evidence" value="ECO:0007669"/>
    <property type="project" value="Ensembl"/>
</dbReference>
<dbReference type="GO" id="GO:0015793">
    <property type="term" value="P:glycerol transmembrane transport"/>
    <property type="evidence" value="ECO:0000314"/>
    <property type="project" value="UniProtKB"/>
</dbReference>
<dbReference type="GO" id="GO:0042476">
    <property type="term" value="P:odontogenesis"/>
    <property type="evidence" value="ECO:0000270"/>
    <property type="project" value="UniProtKB"/>
</dbReference>
<dbReference type="GO" id="GO:0002684">
    <property type="term" value="P:positive regulation of immune system process"/>
    <property type="evidence" value="ECO:0000314"/>
    <property type="project" value="BHF-UCL"/>
</dbReference>
<dbReference type="GO" id="GO:0045616">
    <property type="term" value="P:regulation of keratinocyte differentiation"/>
    <property type="evidence" value="ECO:0000304"/>
    <property type="project" value="BHF-UCL"/>
</dbReference>
<dbReference type="GO" id="GO:0070295">
    <property type="term" value="P:renal water absorption"/>
    <property type="evidence" value="ECO:0007669"/>
    <property type="project" value="Ensembl"/>
</dbReference>
<dbReference type="GO" id="GO:0003091">
    <property type="term" value="P:renal water homeostasis"/>
    <property type="evidence" value="ECO:0000304"/>
    <property type="project" value="Reactome"/>
</dbReference>
<dbReference type="GO" id="GO:0051592">
    <property type="term" value="P:response to calcium ion"/>
    <property type="evidence" value="ECO:0000304"/>
    <property type="project" value="BHF-UCL"/>
</dbReference>
<dbReference type="GO" id="GO:0002931">
    <property type="term" value="P:response to ischemia"/>
    <property type="evidence" value="ECO:0007669"/>
    <property type="project" value="Ensembl"/>
</dbReference>
<dbReference type="GO" id="GO:0032526">
    <property type="term" value="P:response to retinoic acid"/>
    <property type="evidence" value="ECO:0000314"/>
    <property type="project" value="BHF-UCL"/>
</dbReference>
<dbReference type="GO" id="GO:0033280">
    <property type="term" value="P:response to vitamin D"/>
    <property type="evidence" value="ECO:0000304"/>
    <property type="project" value="BHF-UCL"/>
</dbReference>
<dbReference type="GO" id="GO:0015840">
    <property type="term" value="P:urea transport"/>
    <property type="evidence" value="ECO:0007669"/>
    <property type="project" value="Ensembl"/>
</dbReference>
<dbReference type="GO" id="GO:0006833">
    <property type="term" value="P:water transport"/>
    <property type="evidence" value="ECO:0000314"/>
    <property type="project" value="UniProtKB"/>
</dbReference>
<dbReference type="CDD" id="cd00333">
    <property type="entry name" value="MIP"/>
    <property type="match status" value="1"/>
</dbReference>
<dbReference type="FunFam" id="1.20.1080.10:FF:000005">
    <property type="entry name" value="Aquaporin 3"/>
    <property type="match status" value="1"/>
</dbReference>
<dbReference type="Gene3D" id="1.20.1080.10">
    <property type="entry name" value="Glycerol uptake facilitator protein"/>
    <property type="match status" value="1"/>
</dbReference>
<dbReference type="InterPro" id="IPR023271">
    <property type="entry name" value="Aquaporin-like"/>
</dbReference>
<dbReference type="InterPro" id="IPR023275">
    <property type="entry name" value="Aquaporin_3"/>
</dbReference>
<dbReference type="InterPro" id="IPR000425">
    <property type="entry name" value="MIP"/>
</dbReference>
<dbReference type="InterPro" id="IPR050363">
    <property type="entry name" value="MIP/Aquaporin"/>
</dbReference>
<dbReference type="InterPro" id="IPR022357">
    <property type="entry name" value="MIP_CS"/>
</dbReference>
<dbReference type="NCBIfam" id="TIGR00861">
    <property type="entry name" value="MIP"/>
    <property type="match status" value="1"/>
</dbReference>
<dbReference type="PANTHER" id="PTHR43829">
    <property type="entry name" value="AQUAPORIN OR AQUAGLYCEROPORIN RELATED"/>
    <property type="match status" value="1"/>
</dbReference>
<dbReference type="PANTHER" id="PTHR43829:SF7">
    <property type="entry name" value="AQUAPORIN-3"/>
    <property type="match status" value="1"/>
</dbReference>
<dbReference type="Pfam" id="PF00230">
    <property type="entry name" value="MIP"/>
    <property type="match status" value="1"/>
</dbReference>
<dbReference type="PRINTS" id="PR02015">
    <property type="entry name" value="AQUAPORIN3"/>
</dbReference>
<dbReference type="PRINTS" id="PR00783">
    <property type="entry name" value="MINTRINSICP"/>
</dbReference>
<dbReference type="SUPFAM" id="SSF81338">
    <property type="entry name" value="Aquaporin-like"/>
    <property type="match status" value="1"/>
</dbReference>
<dbReference type="PROSITE" id="PS00221">
    <property type="entry name" value="MIP"/>
    <property type="match status" value="1"/>
</dbReference>
<organism>
    <name type="scientific">Homo sapiens</name>
    <name type="common">Human</name>
    <dbReference type="NCBI Taxonomy" id="9606"/>
    <lineage>
        <taxon>Eukaryota</taxon>
        <taxon>Metazoa</taxon>
        <taxon>Chordata</taxon>
        <taxon>Craniata</taxon>
        <taxon>Vertebrata</taxon>
        <taxon>Euteleostomi</taxon>
        <taxon>Mammalia</taxon>
        <taxon>Eutheria</taxon>
        <taxon>Euarchontoglires</taxon>
        <taxon>Primates</taxon>
        <taxon>Haplorrhini</taxon>
        <taxon>Catarrhini</taxon>
        <taxon>Hominidae</taxon>
        <taxon>Homo</taxon>
    </lineage>
</organism>
<reference key="1">
    <citation type="journal article" date="1995" name="Genomics">
        <title>Structure and chromosomal localization of a human water channel (AQP3) gene.</title>
        <authorList>
            <person name="Ishibashi K."/>
            <person name="Sasaki S."/>
            <person name="Saito F."/>
            <person name="Ikeuchi T."/>
            <person name="Marumo F."/>
        </authorList>
    </citation>
    <scope>NUCLEOTIDE SEQUENCE [MRNA] (ISOFORM 1)</scope>
    <source>
        <tissue>Kidney</tissue>
    </source>
</reference>
<reference key="2">
    <citation type="submission" date="1996-10" db="EMBL/GenBank/DDBJ databases">
        <authorList>
            <person name="Ishibashi K."/>
        </authorList>
    </citation>
    <scope>SEQUENCE REVISION TO 91; 96 AND 186</scope>
</reference>
<reference key="3">
    <citation type="journal article" date="2002" name="J. Biol. Chem.">
        <title>AQP3 deficiency in humans and the molecular basis of a novel blood group system, GIL.</title>
        <authorList>
            <person name="Roudier N."/>
            <person name="Ripoche P."/>
            <person name="Gane P."/>
            <person name="Le Pennec P.Y."/>
            <person name="Daniels G."/>
            <person name="Cartron J.-P."/>
            <person name="Bailly P."/>
        </authorList>
    </citation>
    <scope>NUCLEOTIDE SEQUENCE [MRNA] (ISOFORM 2)</scope>
    <scope>FUNCTION</scope>
    <scope>TRANSPORTER ACTIVITY</scope>
    <scope>SUBCELLULAR LOCATION</scope>
    <scope>GIL BLOOD GROUP SYSTEM</scope>
    <source>
        <tissue>Blood</tissue>
    </source>
</reference>
<reference key="4">
    <citation type="submission" date="2004-06" db="EMBL/GenBank/DDBJ databases">
        <title>Cloning of human full open reading frames in Gateway(TM) system entry vector (pDONR201).</title>
        <authorList>
            <person name="Halleck A."/>
            <person name="Ebert L."/>
            <person name="Mkoundinya M."/>
            <person name="Schick M."/>
            <person name="Eisenstein S."/>
            <person name="Neubert P."/>
            <person name="Kstrang K."/>
            <person name="Schatten R."/>
            <person name="Shen B."/>
            <person name="Henze S."/>
            <person name="Mar W."/>
            <person name="Korn B."/>
            <person name="Zuo D."/>
            <person name="Hu Y."/>
            <person name="LaBaer J."/>
        </authorList>
    </citation>
    <scope>NUCLEOTIDE SEQUENCE [LARGE SCALE MRNA] (ISOFORM 1)</scope>
</reference>
<reference key="5">
    <citation type="submission" date="2003-05" db="EMBL/GenBank/DDBJ databases">
        <title>Cloning of human full-length CDSs in BD Creator(TM) system donor vector.</title>
        <authorList>
            <person name="Kalnine N."/>
            <person name="Chen X."/>
            <person name="Rolfs A."/>
            <person name="Halleck A."/>
            <person name="Hines L."/>
            <person name="Eisenstein S."/>
            <person name="Koundinya M."/>
            <person name="Raphael J."/>
            <person name="Moreira D."/>
            <person name="Kelley T."/>
            <person name="LaBaer J."/>
            <person name="Lin Y."/>
            <person name="Phelan M."/>
            <person name="Farmer A."/>
        </authorList>
    </citation>
    <scope>NUCLEOTIDE SEQUENCE [LARGE SCALE MRNA] (ISOFORM 1)</scope>
</reference>
<reference key="6">
    <citation type="journal article" date="2004" name="Nat. Genet.">
        <title>Complete sequencing and characterization of 21,243 full-length human cDNAs.</title>
        <authorList>
            <person name="Ota T."/>
            <person name="Suzuki Y."/>
            <person name="Nishikawa T."/>
            <person name="Otsuki T."/>
            <person name="Sugiyama T."/>
            <person name="Irie R."/>
            <person name="Wakamatsu A."/>
            <person name="Hayashi K."/>
            <person name="Sato H."/>
            <person name="Nagai K."/>
            <person name="Kimura K."/>
            <person name="Makita H."/>
            <person name="Sekine M."/>
            <person name="Obayashi M."/>
            <person name="Nishi T."/>
            <person name="Shibahara T."/>
            <person name="Tanaka T."/>
            <person name="Ishii S."/>
            <person name="Yamamoto J."/>
            <person name="Saito K."/>
            <person name="Kawai Y."/>
            <person name="Isono Y."/>
            <person name="Nakamura Y."/>
            <person name="Nagahari K."/>
            <person name="Murakami K."/>
            <person name="Yasuda T."/>
            <person name="Iwayanagi T."/>
            <person name="Wagatsuma M."/>
            <person name="Shiratori A."/>
            <person name="Sudo H."/>
            <person name="Hosoiri T."/>
            <person name="Kaku Y."/>
            <person name="Kodaira H."/>
            <person name="Kondo H."/>
            <person name="Sugawara M."/>
            <person name="Takahashi M."/>
            <person name="Kanda K."/>
            <person name="Yokoi T."/>
            <person name="Furuya T."/>
            <person name="Kikkawa E."/>
            <person name="Omura Y."/>
            <person name="Abe K."/>
            <person name="Kamihara K."/>
            <person name="Katsuta N."/>
            <person name="Sato K."/>
            <person name="Tanikawa M."/>
            <person name="Yamazaki M."/>
            <person name="Ninomiya K."/>
            <person name="Ishibashi T."/>
            <person name="Yamashita H."/>
            <person name="Murakawa K."/>
            <person name="Fujimori K."/>
            <person name="Tanai H."/>
            <person name="Kimata M."/>
            <person name="Watanabe M."/>
            <person name="Hiraoka S."/>
            <person name="Chiba Y."/>
            <person name="Ishida S."/>
            <person name="Ono Y."/>
            <person name="Takiguchi S."/>
            <person name="Watanabe S."/>
            <person name="Yosida M."/>
            <person name="Hotuta T."/>
            <person name="Kusano J."/>
            <person name="Kanehori K."/>
            <person name="Takahashi-Fujii A."/>
            <person name="Hara H."/>
            <person name="Tanase T.-O."/>
            <person name="Nomura Y."/>
            <person name="Togiya S."/>
            <person name="Komai F."/>
            <person name="Hara R."/>
            <person name="Takeuchi K."/>
            <person name="Arita M."/>
            <person name="Imose N."/>
            <person name="Musashino K."/>
            <person name="Yuuki H."/>
            <person name="Oshima A."/>
            <person name="Sasaki N."/>
            <person name="Aotsuka S."/>
            <person name="Yoshikawa Y."/>
            <person name="Matsunawa H."/>
            <person name="Ichihara T."/>
            <person name="Shiohata N."/>
            <person name="Sano S."/>
            <person name="Moriya S."/>
            <person name="Momiyama H."/>
            <person name="Satoh N."/>
            <person name="Takami S."/>
            <person name="Terashima Y."/>
            <person name="Suzuki O."/>
            <person name="Nakagawa S."/>
            <person name="Senoh A."/>
            <person name="Mizoguchi H."/>
            <person name="Goto Y."/>
            <person name="Shimizu F."/>
            <person name="Wakebe H."/>
            <person name="Hishigaki H."/>
            <person name="Watanabe T."/>
            <person name="Sugiyama A."/>
            <person name="Takemoto M."/>
            <person name="Kawakami B."/>
            <person name="Yamazaki M."/>
            <person name="Watanabe K."/>
            <person name="Kumagai A."/>
            <person name="Itakura S."/>
            <person name="Fukuzumi Y."/>
            <person name="Fujimori Y."/>
            <person name="Komiyama M."/>
            <person name="Tashiro H."/>
            <person name="Tanigami A."/>
            <person name="Fujiwara T."/>
            <person name="Ono T."/>
            <person name="Yamada K."/>
            <person name="Fujii Y."/>
            <person name="Ozaki K."/>
            <person name="Hirao M."/>
            <person name="Ohmori Y."/>
            <person name="Kawabata A."/>
            <person name="Hikiji T."/>
            <person name="Kobatake N."/>
            <person name="Inagaki H."/>
            <person name="Ikema Y."/>
            <person name="Okamoto S."/>
            <person name="Okitani R."/>
            <person name="Kawakami T."/>
            <person name="Noguchi S."/>
            <person name="Itoh T."/>
            <person name="Shigeta K."/>
            <person name="Senba T."/>
            <person name="Matsumura K."/>
            <person name="Nakajima Y."/>
            <person name="Mizuno T."/>
            <person name="Morinaga M."/>
            <person name="Sasaki M."/>
            <person name="Togashi T."/>
            <person name="Oyama M."/>
            <person name="Hata H."/>
            <person name="Watanabe M."/>
            <person name="Komatsu T."/>
            <person name="Mizushima-Sugano J."/>
            <person name="Satoh T."/>
            <person name="Shirai Y."/>
            <person name="Takahashi Y."/>
            <person name="Nakagawa K."/>
            <person name="Okumura K."/>
            <person name="Nagase T."/>
            <person name="Nomura N."/>
            <person name="Kikuchi H."/>
            <person name="Masuho Y."/>
            <person name="Yamashita R."/>
            <person name="Nakai K."/>
            <person name="Yada T."/>
            <person name="Nakamura Y."/>
            <person name="Ohara O."/>
            <person name="Isogai T."/>
            <person name="Sugano S."/>
        </authorList>
    </citation>
    <scope>NUCLEOTIDE SEQUENCE [LARGE SCALE MRNA] (ISOFORM 1)</scope>
    <source>
        <tissue>Esophagus</tissue>
        <tissue>Trachea</tissue>
    </source>
</reference>
<reference key="7">
    <citation type="submission" date="2005-06" db="EMBL/GenBank/DDBJ databases">
        <authorList>
            <consortium name="SeattleSNPs variation discovery resource"/>
        </authorList>
    </citation>
    <scope>NUCLEOTIDE SEQUENCE [GENOMIC DNA]</scope>
    <scope>VARIANT MET-43</scope>
</reference>
<reference key="8">
    <citation type="journal article" date="2004" name="Nature">
        <title>DNA sequence and analysis of human chromosome 9.</title>
        <authorList>
            <person name="Humphray S.J."/>
            <person name="Oliver K."/>
            <person name="Hunt A.R."/>
            <person name="Plumb R.W."/>
            <person name="Loveland J.E."/>
            <person name="Howe K.L."/>
            <person name="Andrews T.D."/>
            <person name="Searle S."/>
            <person name="Hunt S.E."/>
            <person name="Scott C.E."/>
            <person name="Jones M.C."/>
            <person name="Ainscough R."/>
            <person name="Almeida J.P."/>
            <person name="Ambrose K.D."/>
            <person name="Ashwell R.I.S."/>
            <person name="Babbage A.K."/>
            <person name="Babbage S."/>
            <person name="Bagguley C.L."/>
            <person name="Bailey J."/>
            <person name="Banerjee R."/>
            <person name="Barker D.J."/>
            <person name="Barlow K.F."/>
            <person name="Bates K."/>
            <person name="Beasley H."/>
            <person name="Beasley O."/>
            <person name="Bird C.P."/>
            <person name="Bray-Allen S."/>
            <person name="Brown A.J."/>
            <person name="Brown J.Y."/>
            <person name="Burford D."/>
            <person name="Burrill W."/>
            <person name="Burton J."/>
            <person name="Carder C."/>
            <person name="Carter N.P."/>
            <person name="Chapman J.C."/>
            <person name="Chen Y."/>
            <person name="Clarke G."/>
            <person name="Clark S.Y."/>
            <person name="Clee C.M."/>
            <person name="Clegg S."/>
            <person name="Collier R.E."/>
            <person name="Corby N."/>
            <person name="Crosier M."/>
            <person name="Cummings A.T."/>
            <person name="Davies J."/>
            <person name="Dhami P."/>
            <person name="Dunn M."/>
            <person name="Dutta I."/>
            <person name="Dyer L.W."/>
            <person name="Earthrowl M.E."/>
            <person name="Faulkner L."/>
            <person name="Fleming C.J."/>
            <person name="Frankish A."/>
            <person name="Frankland J.A."/>
            <person name="French L."/>
            <person name="Fricker D.G."/>
            <person name="Garner P."/>
            <person name="Garnett J."/>
            <person name="Ghori J."/>
            <person name="Gilbert J.G.R."/>
            <person name="Glison C."/>
            <person name="Grafham D.V."/>
            <person name="Gribble S."/>
            <person name="Griffiths C."/>
            <person name="Griffiths-Jones S."/>
            <person name="Grocock R."/>
            <person name="Guy J."/>
            <person name="Hall R.E."/>
            <person name="Hammond S."/>
            <person name="Harley J.L."/>
            <person name="Harrison E.S.I."/>
            <person name="Hart E.A."/>
            <person name="Heath P.D."/>
            <person name="Henderson C.D."/>
            <person name="Hopkins B.L."/>
            <person name="Howard P.J."/>
            <person name="Howden P.J."/>
            <person name="Huckle E."/>
            <person name="Johnson C."/>
            <person name="Johnson D."/>
            <person name="Joy A.A."/>
            <person name="Kay M."/>
            <person name="Keenan S."/>
            <person name="Kershaw J.K."/>
            <person name="Kimberley A.M."/>
            <person name="King A."/>
            <person name="Knights A."/>
            <person name="Laird G.K."/>
            <person name="Langford C."/>
            <person name="Lawlor S."/>
            <person name="Leongamornlert D.A."/>
            <person name="Leversha M."/>
            <person name="Lloyd C."/>
            <person name="Lloyd D.M."/>
            <person name="Lovell J."/>
            <person name="Martin S."/>
            <person name="Mashreghi-Mohammadi M."/>
            <person name="Matthews L."/>
            <person name="McLaren S."/>
            <person name="McLay K.E."/>
            <person name="McMurray A."/>
            <person name="Milne S."/>
            <person name="Nickerson T."/>
            <person name="Nisbett J."/>
            <person name="Nordsiek G."/>
            <person name="Pearce A.V."/>
            <person name="Peck A.I."/>
            <person name="Porter K.M."/>
            <person name="Pandian R."/>
            <person name="Pelan S."/>
            <person name="Phillimore B."/>
            <person name="Povey S."/>
            <person name="Ramsey Y."/>
            <person name="Rand V."/>
            <person name="Scharfe M."/>
            <person name="Sehra H.K."/>
            <person name="Shownkeen R."/>
            <person name="Sims S.K."/>
            <person name="Skuce C.D."/>
            <person name="Smith M."/>
            <person name="Steward C.A."/>
            <person name="Swarbreck D."/>
            <person name="Sycamore N."/>
            <person name="Tester J."/>
            <person name="Thorpe A."/>
            <person name="Tracey A."/>
            <person name="Tromans A."/>
            <person name="Thomas D.W."/>
            <person name="Wall M."/>
            <person name="Wallis J.M."/>
            <person name="West A.P."/>
            <person name="Whitehead S.L."/>
            <person name="Willey D.L."/>
            <person name="Williams S.A."/>
            <person name="Wilming L."/>
            <person name="Wray P.W."/>
            <person name="Young L."/>
            <person name="Ashurst J.L."/>
            <person name="Coulson A."/>
            <person name="Blocker H."/>
            <person name="Durbin R.M."/>
            <person name="Sulston J.E."/>
            <person name="Hubbard T."/>
            <person name="Jackson M.J."/>
            <person name="Bentley D.R."/>
            <person name="Beck S."/>
            <person name="Rogers J."/>
            <person name="Dunham I."/>
        </authorList>
    </citation>
    <scope>NUCLEOTIDE SEQUENCE [LARGE SCALE GENOMIC DNA]</scope>
</reference>
<reference key="9">
    <citation type="submission" date="2005-09" db="EMBL/GenBank/DDBJ databases">
        <authorList>
            <person name="Mural R.J."/>
            <person name="Istrail S."/>
            <person name="Sutton G.G."/>
            <person name="Florea L."/>
            <person name="Halpern A.L."/>
            <person name="Mobarry C.M."/>
            <person name="Lippert R."/>
            <person name="Walenz B."/>
            <person name="Shatkay H."/>
            <person name="Dew I."/>
            <person name="Miller J.R."/>
            <person name="Flanigan M.J."/>
            <person name="Edwards N.J."/>
            <person name="Bolanos R."/>
            <person name="Fasulo D."/>
            <person name="Halldorsson B.V."/>
            <person name="Hannenhalli S."/>
            <person name="Turner R."/>
            <person name="Yooseph S."/>
            <person name="Lu F."/>
            <person name="Nusskern D.R."/>
            <person name="Shue B.C."/>
            <person name="Zheng X.H."/>
            <person name="Zhong F."/>
            <person name="Delcher A.L."/>
            <person name="Huson D.H."/>
            <person name="Kravitz S.A."/>
            <person name="Mouchard L."/>
            <person name="Reinert K."/>
            <person name="Remington K.A."/>
            <person name="Clark A.G."/>
            <person name="Waterman M.S."/>
            <person name="Eichler E.E."/>
            <person name="Adams M.D."/>
            <person name="Hunkapiller M.W."/>
            <person name="Myers E.W."/>
            <person name="Venter J.C."/>
        </authorList>
    </citation>
    <scope>NUCLEOTIDE SEQUENCE [LARGE SCALE GENOMIC DNA]</scope>
</reference>
<reference key="10">
    <citation type="journal article" date="2004" name="Genome Res.">
        <title>The status, quality, and expansion of the NIH full-length cDNA project: the Mammalian Gene Collection (MGC).</title>
        <authorList>
            <consortium name="The MGC Project Team"/>
        </authorList>
    </citation>
    <scope>NUCLEOTIDE SEQUENCE [LARGE SCALE MRNA] (ISOFORM 1)</scope>
    <source>
        <tissue>Lung</tissue>
    </source>
</reference>
<reference key="11">
    <citation type="journal article" date="2002" name="J. Biol. Chem.">
        <title>Erythroid expression and oligomeric state of the AQP3 protein.</title>
        <authorList>
            <person name="Roudier N."/>
            <person name="Bailly P."/>
            <person name="Gane P."/>
            <person name="Lucien N."/>
            <person name="Gobin R."/>
            <person name="Cartron J.P."/>
            <person name="Ripoche P."/>
        </authorList>
    </citation>
    <scope>SUBUNIT</scope>
</reference>
<reference key="12">
    <citation type="journal article" date="2008" name="Eur. J. Pharmacol.">
        <title>Regulation of aquaporin 3 expression by magnesium ion.</title>
        <authorList>
            <person name="Okahira M."/>
            <person name="Kubota M."/>
            <person name="Iguchi K."/>
            <person name="Usui S."/>
            <person name="Hirano K."/>
        </authorList>
    </citation>
    <scope>INDUCTION</scope>
</reference>
<reference key="13">
    <citation type="journal article" date="2010" name="Proc. Natl. Acad. Sci. U.S.A.">
        <title>Aquaporin-3 mediates hydrogen peroxide uptake to regulate downstream intracellular signaling.</title>
        <authorList>
            <person name="Miller E.W."/>
            <person name="Dickinson B.C."/>
            <person name="Chang C.J."/>
        </authorList>
    </citation>
    <scope>FUNCTION</scope>
    <scope>TRANSPORTER ACTIVITY</scope>
</reference>
<reference key="14">
    <citation type="journal article" date="2018" name="Nat. Commun.">
        <title>Human adipose glycerol flux is regulated by a pH gate in AQP10.</title>
        <authorList>
            <person name="Gotfryd K."/>
            <person name="Mosca A.F."/>
            <person name="Missel J.W."/>
            <person name="Truelsen S.F."/>
            <person name="Wang K."/>
            <person name="Spulber M."/>
            <person name="Krabbe S."/>
            <person name="Helix-Nielsen C."/>
            <person name="Laforenza U."/>
            <person name="Soveral G."/>
            <person name="Pedersen P.A."/>
            <person name="Gourdon P."/>
        </authorList>
    </citation>
    <scope>FUNCTION</scope>
    <scope>TRANSPORTER ACTIVITY</scope>
</reference>
<proteinExistence type="evidence at protein level"/>
<feature type="chain" id="PRO_0000063943" description="Aquaporin-3">
    <location>
        <begin position="1"/>
        <end position="292"/>
    </location>
</feature>
<feature type="topological domain" description="Cytoplasmic" evidence="1">
    <location>
        <begin position="1"/>
        <end position="24"/>
    </location>
</feature>
<feature type="transmembrane region" description="Helical; Name=1" evidence="1">
    <location>
        <begin position="25"/>
        <end position="42"/>
    </location>
</feature>
<feature type="topological domain" description="Extracellular" evidence="1">
    <location>
        <begin position="43"/>
        <end position="56"/>
    </location>
</feature>
<feature type="transmembrane region" description="Helical; Name=2" evidence="1">
    <location>
        <begin position="57"/>
        <end position="74"/>
    </location>
</feature>
<feature type="topological domain" description="Cytoplasmic" evidence="1">
    <location>
        <begin position="75"/>
        <end position="78"/>
    </location>
</feature>
<feature type="intramembrane region" description="Discontinuously helical" evidence="1">
    <location>
        <begin position="79"/>
        <end position="92"/>
    </location>
</feature>
<feature type="topological domain" description="Cytoplasmic" evidence="1">
    <location>
        <begin position="93"/>
        <end position="100"/>
    </location>
</feature>
<feature type="transmembrane region" description="Helical; Name=3" evidence="1">
    <location>
        <begin position="101"/>
        <end position="121"/>
    </location>
</feature>
<feature type="topological domain" description="Extracellular" evidence="1">
    <location>
        <begin position="122"/>
        <end position="159"/>
    </location>
</feature>
<feature type="transmembrane region" description="Helical; Name=4" evidence="1">
    <location>
        <begin position="160"/>
        <end position="177"/>
    </location>
</feature>
<feature type="topological domain" description="Cytoplasmic" evidence="1">
    <location>
        <begin position="178"/>
        <end position="189"/>
    </location>
</feature>
<feature type="transmembrane region" description="Helical; Name=5" evidence="1">
    <location>
        <begin position="190"/>
        <end position="206"/>
    </location>
</feature>
<feature type="topological domain" description="Extracellular" evidence="1">
    <location>
        <begin position="207"/>
        <end position="210"/>
    </location>
</feature>
<feature type="intramembrane region" description="Discontinuously helical" evidence="1">
    <location>
        <begin position="211"/>
        <end position="224"/>
    </location>
</feature>
<feature type="topological domain" description="Extracellular" evidence="1">
    <location>
        <begin position="225"/>
        <end position="242"/>
    </location>
</feature>
<feature type="transmembrane region" description="Helical; Name=6" evidence="1">
    <location>
        <begin position="243"/>
        <end position="264"/>
    </location>
</feature>
<feature type="topological domain" description="Cytoplasmic" evidence="1">
    <location>
        <begin position="265"/>
        <end position="292"/>
    </location>
</feature>
<feature type="short sequence motif" description="NPA 1" evidence="1">
    <location>
        <begin position="83"/>
        <end position="85"/>
    </location>
</feature>
<feature type="short sequence motif" description="NPA 2" evidence="1">
    <location>
        <begin position="215"/>
        <end position="217"/>
    </location>
</feature>
<feature type="site" description="Selectivity filter" evidence="1">
    <location>
        <position position="63"/>
    </location>
</feature>
<feature type="site" description="Selectivity filter" evidence="1">
    <location>
        <position position="212"/>
    </location>
</feature>
<feature type="site" description="Selectivity filter" evidence="1">
    <location>
        <position position="218"/>
    </location>
</feature>
<feature type="glycosylation site" description="N-linked (GlcNAc...) asparagine" evidence="4">
    <location>
        <position position="141"/>
    </location>
</feature>
<feature type="splice variant" id="VSP_003229" description="In isoform 2." evidence="11">
    <original>FIGTASLIVCVLAIVDPYNNPVPRGLEAFTVGLVVLVIGTSMGFNSGYAVNPARDFGPRLFTALAGWGSAVFTTGQHWWWVPIVSPLLGSIAGVFVYQLMIGCHLEQPPPSNEEENV</original>
    <variation>DRPALVVGAHRVPTPGLHCGCLRVPADDRLPPGAAPTLQRGRECEAGPCEAQGADLSGKGHLPLRCPGLEHPLTVQGHSQEAPLHDPPFQAKELPIYPHPTKTAPSGFPLDLAQIAP</variation>
    <location>
        <begin position="165"/>
        <end position="281"/>
    </location>
</feature>
<feature type="splice variant" id="VSP_003230" description="In isoform 2." evidence="11">
    <location>
        <begin position="282"/>
        <end position="292"/>
    </location>
</feature>
<feature type="sequence variant" id="VAR_025089" description="In dbSNP:rs34942735." evidence="10">
    <original>V</original>
    <variation>M</variation>
    <location>
        <position position="43"/>
    </location>
</feature>
<feature type="sequence conflict" description="In Ref. 6; BAF84897." evidence="14" ref="6">
    <original>R</original>
    <variation>G</variation>
    <location>
        <position position="23"/>
    </location>
</feature>
<feature type="sequence conflict" description="In Ref. 4; CAG46822." evidence="14" ref="4">
    <original>V</original>
    <variation>A</variation>
    <location>
        <position position="137"/>
    </location>
</feature>